<reference key="1">
    <citation type="submission" date="1993-06" db="EMBL/GenBank/DDBJ databases">
        <title>Cloning and sequencing of the allophycocyanin operon from the thermophilic cyanobacterium Synechococcus elongatus.</title>
        <authorList>
            <person name="Shimazu T."/>
            <person name="Soga M."/>
            <person name="Hirano M."/>
            <person name="Katoh S."/>
        </authorList>
    </citation>
    <scope>NUCLEOTIDE SEQUENCE [GENOMIC DNA]</scope>
</reference>
<reference key="2">
    <citation type="journal article" date="2002" name="DNA Res.">
        <title>Complete genome structure of the thermophilic cyanobacterium Thermosynechococcus elongatus BP-1.</title>
        <authorList>
            <person name="Nakamura Y."/>
            <person name="Kaneko T."/>
            <person name="Sato S."/>
            <person name="Ikeuchi M."/>
            <person name="Katoh H."/>
            <person name="Sasamoto S."/>
            <person name="Watanabe A."/>
            <person name="Iriguchi M."/>
            <person name="Kawashima K."/>
            <person name="Kimura T."/>
            <person name="Kishida Y."/>
            <person name="Kiyokawa C."/>
            <person name="Kohara M."/>
            <person name="Matsumoto M."/>
            <person name="Matsuno A."/>
            <person name="Nakazaki N."/>
            <person name="Shimpo S."/>
            <person name="Sugimoto M."/>
            <person name="Takeuchi C."/>
            <person name="Yamada M."/>
            <person name="Tabata S."/>
        </authorList>
    </citation>
    <scope>NUCLEOTIDE SEQUENCE [LARGE SCALE GENOMIC DNA]</scope>
    <source>
        <strain>NIES-2133 / IAM M-273 / BP-1</strain>
    </source>
</reference>
<organism>
    <name type="scientific">Thermosynechococcus vestitus (strain NIES-2133 / IAM M-273 / BP-1)</name>
    <dbReference type="NCBI Taxonomy" id="197221"/>
    <lineage>
        <taxon>Bacteria</taxon>
        <taxon>Bacillati</taxon>
        <taxon>Cyanobacteriota</taxon>
        <taxon>Cyanophyceae</taxon>
        <taxon>Acaryochloridales</taxon>
        <taxon>Thermosynechococcaceae</taxon>
        <taxon>Thermosynechococcus</taxon>
    </lineage>
</organism>
<accession>P50031</accession>
<comment type="function">
    <text>Light-harvesting photosynthetic bile pigment-protein from the phycobiliprotein complex. Allophycocyanin has a maximum absorption at approximately 650 nanometers.</text>
</comment>
<comment type="subunit">
    <text evidence="1">Heterodimer of an alpha and a beta chain.</text>
</comment>
<comment type="subcellular location">
    <subcellularLocation>
        <location evidence="1">Cellular thylakoid membrane</location>
        <topology evidence="1">Peripheral membrane protein</topology>
        <orientation evidence="1">Cytoplasmic side</orientation>
    </subcellularLocation>
    <text evidence="1">Forms the core of the phycobilisome.</text>
</comment>
<comment type="PTM">
    <text evidence="1">Contains one covalently linked phycocyanobilin chromophore.</text>
</comment>
<comment type="similarity">
    <text evidence="2">Belongs to the phycobiliprotein family.</text>
</comment>
<keyword id="KW-0002">3D-structure</keyword>
<keyword id="KW-0042">Antenna complex</keyword>
<keyword id="KW-0089">Bile pigment</keyword>
<keyword id="KW-0157">Chromophore</keyword>
<keyword id="KW-0249">Electron transport</keyword>
<keyword id="KW-0472">Membrane</keyword>
<keyword id="KW-0488">Methylation</keyword>
<keyword id="KW-0602">Photosynthesis</keyword>
<keyword id="KW-0605">Phycobilisome</keyword>
<keyword id="KW-1185">Reference proteome</keyword>
<keyword id="KW-0793">Thylakoid</keyword>
<keyword id="KW-0813">Transport</keyword>
<gene>
    <name type="primary">apcB</name>
    <name type="ordered locus">tll0956</name>
</gene>
<dbReference type="EMBL" id="D16540">
    <property type="protein sequence ID" value="BAA03977.1"/>
    <property type="molecule type" value="Genomic_DNA"/>
</dbReference>
<dbReference type="EMBL" id="BA000039">
    <property type="protein sequence ID" value="BAC08508.1"/>
    <property type="molecule type" value="Genomic_DNA"/>
</dbReference>
<dbReference type="RefSeq" id="NP_681746.1">
    <property type="nucleotide sequence ID" value="NC_004113.1"/>
</dbReference>
<dbReference type="RefSeq" id="WP_011056800.1">
    <property type="nucleotide sequence ID" value="NC_004113.1"/>
</dbReference>
<dbReference type="PDB" id="2V8A">
    <property type="method" value="X-ray"/>
    <property type="resolution" value="3.50 A"/>
    <property type="chains" value="B=1-161"/>
</dbReference>
<dbReference type="PDB" id="3DBJ">
    <property type="method" value="X-ray"/>
    <property type="resolution" value="2.90 A"/>
    <property type="chains" value="B/D/F/H=1-161"/>
</dbReference>
<dbReference type="PDB" id="7VEA">
    <property type="method" value="EM"/>
    <property type="resolution" value="3.70 A"/>
    <property type="chains" value="aB/aD/aF/aH/aJ/aL/aN/aP/bN/bP/bR/bT/bV/bX/cB/cD/cF/cH/cJ/cL/dB/dD/dF/dH/dJ/dL/dN/dP/eN/eP=1-161"/>
</dbReference>
<dbReference type="PDBsum" id="2V8A"/>
<dbReference type="PDBsum" id="3DBJ"/>
<dbReference type="PDBsum" id="7VEA"/>
<dbReference type="EMDB" id="EMD-31944"/>
<dbReference type="SMR" id="P50031"/>
<dbReference type="STRING" id="197221.gene:10747548"/>
<dbReference type="EnsemblBacteria" id="BAC08508">
    <property type="protein sequence ID" value="BAC08508"/>
    <property type="gene ID" value="BAC08508"/>
</dbReference>
<dbReference type="KEGG" id="tel:tll0956"/>
<dbReference type="PATRIC" id="fig|197221.4.peg.1003"/>
<dbReference type="eggNOG" id="ENOG502Z7X0">
    <property type="taxonomic scope" value="Bacteria"/>
</dbReference>
<dbReference type="EvolutionaryTrace" id="P50031"/>
<dbReference type="Proteomes" id="UP000000440">
    <property type="component" value="Chromosome"/>
</dbReference>
<dbReference type="GO" id="GO:0030089">
    <property type="term" value="C:phycobilisome"/>
    <property type="evidence" value="ECO:0007669"/>
    <property type="project" value="UniProtKB-KW"/>
</dbReference>
<dbReference type="GO" id="GO:0031676">
    <property type="term" value="C:plasma membrane-derived thylakoid membrane"/>
    <property type="evidence" value="ECO:0007669"/>
    <property type="project" value="UniProtKB-SubCell"/>
</dbReference>
<dbReference type="GO" id="GO:0015979">
    <property type="term" value="P:photosynthesis"/>
    <property type="evidence" value="ECO:0007669"/>
    <property type="project" value="UniProtKB-KW"/>
</dbReference>
<dbReference type="CDD" id="cd12126">
    <property type="entry name" value="APC_beta"/>
    <property type="match status" value="1"/>
</dbReference>
<dbReference type="Gene3D" id="1.10.490.20">
    <property type="entry name" value="Phycocyanins"/>
    <property type="match status" value="1"/>
</dbReference>
<dbReference type="InterPro" id="IPR006245">
    <property type="entry name" value="Allophycocyanin_b"/>
</dbReference>
<dbReference type="InterPro" id="IPR009050">
    <property type="entry name" value="Globin-like_sf"/>
</dbReference>
<dbReference type="InterPro" id="IPR012128">
    <property type="entry name" value="Phycobilisome_asu/bsu"/>
</dbReference>
<dbReference type="InterPro" id="IPR038719">
    <property type="entry name" value="Phycobilisome_asu/bsu_sf"/>
</dbReference>
<dbReference type="NCBIfam" id="TIGR01337">
    <property type="entry name" value="apcB"/>
    <property type="match status" value="1"/>
</dbReference>
<dbReference type="PANTHER" id="PTHR34011:SF3">
    <property type="entry name" value="ALLOPHYCOCYANIN BETA CHAIN"/>
    <property type="match status" value="1"/>
</dbReference>
<dbReference type="PANTHER" id="PTHR34011">
    <property type="entry name" value="PHYCOBILISOME 32.1 KDA LINKER POLYPEPTIDE, PHYCOCYANIN-ASSOCIATED, ROD 2-RELATED"/>
    <property type="match status" value="1"/>
</dbReference>
<dbReference type="Pfam" id="PF00502">
    <property type="entry name" value="Phycobilisome"/>
    <property type="match status" value="1"/>
</dbReference>
<dbReference type="PIRSF" id="PIRSF000081">
    <property type="entry name" value="Phycocyanin"/>
    <property type="match status" value="1"/>
</dbReference>
<dbReference type="SUPFAM" id="SSF46458">
    <property type="entry name" value="Globin-like"/>
    <property type="match status" value="1"/>
</dbReference>
<feature type="chain" id="PRO_0000199103" description="Allophycocyanin beta chain">
    <location>
        <begin position="1"/>
        <end position="161"/>
    </location>
</feature>
<feature type="binding site" description="covalent" evidence="1">
    <location>
        <position position="81"/>
    </location>
    <ligand>
        <name>(2R,3E)-phycocyanobilin</name>
        <dbReference type="ChEBI" id="CHEBI:85275"/>
    </ligand>
</feature>
<feature type="modified residue" description="N4-methylasparagine" evidence="1">
    <location>
        <position position="71"/>
    </location>
</feature>
<feature type="helix" evidence="3">
    <location>
        <begin position="4"/>
        <end position="15"/>
    </location>
</feature>
<feature type="helix" evidence="3">
    <location>
        <begin position="21"/>
        <end position="32"/>
    </location>
</feature>
<feature type="helix" evidence="3">
    <location>
        <begin position="34"/>
        <end position="46"/>
    </location>
</feature>
<feature type="helix" evidence="3">
    <location>
        <begin position="48"/>
        <end position="59"/>
    </location>
</feature>
<feature type="strand" evidence="3">
    <location>
        <begin position="61"/>
        <end position="63"/>
    </location>
</feature>
<feature type="turn" evidence="3">
    <location>
        <begin position="64"/>
        <end position="66"/>
    </location>
</feature>
<feature type="strand" evidence="3">
    <location>
        <begin position="70"/>
        <end position="72"/>
    </location>
</feature>
<feature type="helix" evidence="3">
    <location>
        <begin position="75"/>
        <end position="98"/>
    </location>
</feature>
<feature type="helix" evidence="3">
    <location>
        <begin position="102"/>
        <end position="107"/>
    </location>
</feature>
<feature type="helix" evidence="3">
    <location>
        <begin position="112"/>
        <end position="119"/>
    </location>
</feature>
<feature type="helix" evidence="3">
    <location>
        <begin position="123"/>
        <end position="141"/>
    </location>
</feature>
<feature type="helix" evidence="3">
    <location>
        <begin position="143"/>
        <end position="160"/>
    </location>
</feature>
<protein>
    <recommendedName>
        <fullName>Allophycocyanin beta chain</fullName>
    </recommendedName>
</protein>
<sequence>MQDAITAVINASDVQGKYLDTAAMEKLKAYFATGELRVRAASVISANAANIVKEAVAKSLLYSDITRPGGNMYTTRRYAACIRDLDYYLRYATYAMLAGDPSILDERVLNGLKETYNSLGVPIAATVQAIQAMKEVTASLVGADAGKEMGIYFDYICSGLS</sequence>
<name>APCB_THEVB</name>
<proteinExistence type="evidence at protein level"/>
<evidence type="ECO:0000250" key="1"/>
<evidence type="ECO:0000305" key="2"/>
<evidence type="ECO:0007829" key="3">
    <source>
        <dbReference type="PDB" id="2V8A"/>
    </source>
</evidence>